<organism>
    <name type="scientific">Brachyspira hyodysenteriae</name>
    <name type="common">Treponema hyodysenteriae</name>
    <dbReference type="NCBI Taxonomy" id="159"/>
    <lineage>
        <taxon>Bacteria</taxon>
        <taxon>Pseudomonadati</taxon>
        <taxon>Spirochaetota</taxon>
        <taxon>Spirochaetia</taxon>
        <taxon>Brachyspirales</taxon>
        <taxon>Brachyspiraceae</taxon>
        <taxon>Brachyspira</taxon>
    </lineage>
</organism>
<sequence>DPNADTDESPALLISASITDTDTVKVILQAFAEDVTDDIYTIGGNLCYIKDSILYISDNSNVIDSIINGEKPATALSADKVEIAKNNTMALYLEFNSNLSLYGIGDEYTETFESVYITSNILESNHTQMLLKVNMRDKERNSLSIIKSFLGL</sequence>
<protein>
    <recommendedName>
        <fullName>Uncharacterized protein in tlyA 5'region</fullName>
    </recommendedName>
    <alternativeName>
        <fullName>ORF1</fullName>
    </alternativeName>
</protein>
<dbReference type="EMBL" id="X61684">
    <property type="protein sequence ID" value="CAA43857.1"/>
    <property type="molecule type" value="Genomic_DNA"/>
</dbReference>
<dbReference type="PIR" id="B43863">
    <property type="entry name" value="B43863"/>
</dbReference>
<feature type="chain" id="PRO_0000066538" description="Uncharacterized protein in tlyA 5'region">
    <location>
        <begin position="1" status="less than"/>
        <end position="152"/>
    </location>
</feature>
<feature type="non-terminal residue">
    <location>
        <position position="1"/>
    </location>
</feature>
<proteinExistence type="predicted"/>
<name>YTYA_BRAHO</name>
<reference key="1">
    <citation type="journal article" date="1992" name="Infect. Immun.">
        <title>Cloning and expression of a Serpula (Treponema) hyodysenteriae hemolysin gene.</title>
        <authorList>
            <person name="Muir S."/>
            <person name="Koopman M.B.H."/>
            <person name="Libby S.J."/>
            <person name="Joens L.A."/>
            <person name="Heffron F."/>
            <person name="Kusters J.G."/>
        </authorList>
    </citation>
    <scope>NUCLEOTIDE SEQUENCE [GENOMIC DNA]</scope>
    <source>
        <strain>B204</strain>
    </source>
</reference>
<accession>Q06809</accession>